<keyword id="KW-0547">Nucleotide-binding</keyword>
<organism>
    <name type="scientific">Salmonella paratyphi B (strain ATCC BAA-1250 / SPB7)</name>
    <dbReference type="NCBI Taxonomy" id="1016998"/>
    <lineage>
        <taxon>Bacteria</taxon>
        <taxon>Pseudomonadati</taxon>
        <taxon>Pseudomonadota</taxon>
        <taxon>Gammaproteobacteria</taxon>
        <taxon>Enterobacterales</taxon>
        <taxon>Enterobacteriaceae</taxon>
        <taxon>Salmonella</taxon>
    </lineage>
</organism>
<proteinExistence type="inferred from homology"/>
<gene>
    <name evidence="1" type="primary">yajQ</name>
    <name type="ordered locus">SPAB_03147</name>
</gene>
<feature type="chain" id="PRO_1000082632" description="Nucleotide-binding protein YajQ">
    <location>
        <begin position="1"/>
        <end position="163"/>
    </location>
</feature>
<name>YAJQ_SALPB</name>
<evidence type="ECO:0000255" key="1">
    <source>
        <dbReference type="HAMAP-Rule" id="MF_00632"/>
    </source>
</evidence>
<accession>A9MWZ5</accession>
<comment type="function">
    <text evidence="1">Nucleotide-binding protein.</text>
</comment>
<comment type="similarity">
    <text evidence="1">Belongs to the YajQ family.</text>
</comment>
<protein>
    <recommendedName>
        <fullName evidence="1">Nucleotide-binding protein YajQ</fullName>
    </recommendedName>
</protein>
<reference key="1">
    <citation type="submission" date="2007-11" db="EMBL/GenBank/DDBJ databases">
        <authorList>
            <consortium name="The Salmonella enterica serovar Paratyphi B Genome Sequencing Project"/>
            <person name="McClelland M."/>
            <person name="Sanderson E.K."/>
            <person name="Porwollik S."/>
            <person name="Spieth J."/>
            <person name="Clifton W.S."/>
            <person name="Fulton R."/>
            <person name="Cordes M."/>
            <person name="Wollam A."/>
            <person name="Shah N."/>
            <person name="Pepin K."/>
            <person name="Bhonagiri V."/>
            <person name="Nash W."/>
            <person name="Johnson M."/>
            <person name="Thiruvilangam P."/>
            <person name="Wilson R."/>
        </authorList>
    </citation>
    <scope>NUCLEOTIDE SEQUENCE [LARGE SCALE GENOMIC DNA]</scope>
    <source>
        <strain>ATCC BAA-1250 / SPB7</strain>
    </source>
</reference>
<sequence>MPSFDIVSEVDLQEARNGVDNAVREVESRFDFRGVEATIELNDANKTIKVLSESDFQVNQLLDILRAKLLKRGIEGASLDVPDEFVHSGKTWYVEAKLKQGIESAVQKKIVKLIKDSKLKVQAQIQGEEIRVTGKSRDDLQSVMALVRGGDLGQPFQFKNFRD</sequence>
<dbReference type="EMBL" id="CP000886">
    <property type="protein sequence ID" value="ABX68508.1"/>
    <property type="molecule type" value="Genomic_DNA"/>
</dbReference>
<dbReference type="RefSeq" id="WP_001138913.1">
    <property type="nucleotide sequence ID" value="NC_010102.1"/>
</dbReference>
<dbReference type="SMR" id="A9MWZ5"/>
<dbReference type="KEGG" id="spq:SPAB_03147"/>
<dbReference type="PATRIC" id="fig|1016998.12.peg.2969"/>
<dbReference type="HOGENOM" id="CLU_099839_1_0_6"/>
<dbReference type="Proteomes" id="UP000008556">
    <property type="component" value="Chromosome"/>
</dbReference>
<dbReference type="GO" id="GO:0005829">
    <property type="term" value="C:cytosol"/>
    <property type="evidence" value="ECO:0007669"/>
    <property type="project" value="TreeGrafter"/>
</dbReference>
<dbReference type="GO" id="GO:0000166">
    <property type="term" value="F:nucleotide binding"/>
    <property type="evidence" value="ECO:0007669"/>
    <property type="project" value="TreeGrafter"/>
</dbReference>
<dbReference type="CDD" id="cd11740">
    <property type="entry name" value="YajQ_like"/>
    <property type="match status" value="1"/>
</dbReference>
<dbReference type="FunFam" id="3.30.70.860:FF:000001">
    <property type="entry name" value="UPF0234 protein YajQ"/>
    <property type="match status" value="1"/>
</dbReference>
<dbReference type="FunFam" id="3.30.70.990:FF:000001">
    <property type="entry name" value="UPF0234 protein YajQ"/>
    <property type="match status" value="1"/>
</dbReference>
<dbReference type="Gene3D" id="3.30.70.860">
    <property type="match status" value="1"/>
</dbReference>
<dbReference type="Gene3D" id="3.30.70.990">
    <property type="entry name" value="YajQ-like, domain 2"/>
    <property type="match status" value="1"/>
</dbReference>
<dbReference type="HAMAP" id="MF_00632">
    <property type="entry name" value="YajQ"/>
    <property type="match status" value="1"/>
</dbReference>
<dbReference type="InterPro" id="IPR007551">
    <property type="entry name" value="DUF520"/>
</dbReference>
<dbReference type="InterPro" id="IPR035571">
    <property type="entry name" value="UPF0234-like_C"/>
</dbReference>
<dbReference type="InterPro" id="IPR035570">
    <property type="entry name" value="UPF0234_N"/>
</dbReference>
<dbReference type="InterPro" id="IPR036183">
    <property type="entry name" value="YajQ-like_sf"/>
</dbReference>
<dbReference type="NCBIfam" id="NF003819">
    <property type="entry name" value="PRK05412.1"/>
    <property type="match status" value="1"/>
</dbReference>
<dbReference type="PANTHER" id="PTHR30476">
    <property type="entry name" value="UPF0234 PROTEIN YAJQ"/>
    <property type="match status" value="1"/>
</dbReference>
<dbReference type="PANTHER" id="PTHR30476:SF0">
    <property type="entry name" value="UPF0234 PROTEIN YAJQ"/>
    <property type="match status" value="1"/>
</dbReference>
<dbReference type="Pfam" id="PF04461">
    <property type="entry name" value="DUF520"/>
    <property type="match status" value="1"/>
</dbReference>
<dbReference type="SUPFAM" id="SSF89963">
    <property type="entry name" value="YajQ-like"/>
    <property type="match status" value="2"/>
</dbReference>